<evidence type="ECO:0000255" key="1">
    <source>
        <dbReference type="HAMAP-Rule" id="MF_00366"/>
    </source>
</evidence>
<organism>
    <name type="scientific">Rickettsia felis (strain ATCC VR-1525 / URRWXCal2)</name>
    <name type="common">Rickettsia azadi</name>
    <dbReference type="NCBI Taxonomy" id="315456"/>
    <lineage>
        <taxon>Bacteria</taxon>
        <taxon>Pseudomonadati</taxon>
        <taxon>Pseudomonadota</taxon>
        <taxon>Alphaproteobacteria</taxon>
        <taxon>Rickettsiales</taxon>
        <taxon>Rickettsiaceae</taxon>
        <taxon>Rickettsieae</taxon>
        <taxon>Rickettsia</taxon>
        <taxon>spotted fever group</taxon>
    </lineage>
</organism>
<feature type="chain" id="PRO_0000237500" description="DNA-directed RNA polymerase subunit omega">
    <location>
        <begin position="1"/>
        <end position="126"/>
    </location>
</feature>
<keyword id="KW-0240">DNA-directed RNA polymerase</keyword>
<keyword id="KW-0548">Nucleotidyltransferase</keyword>
<keyword id="KW-0804">Transcription</keyword>
<keyword id="KW-0808">Transferase</keyword>
<proteinExistence type="inferred from homology"/>
<accession>Q4UKX8</accession>
<reference key="1">
    <citation type="journal article" date="2005" name="PLoS Biol.">
        <title>The genome sequence of Rickettsia felis identifies the first putative conjugative plasmid in an obligate intracellular parasite.</title>
        <authorList>
            <person name="Ogata H."/>
            <person name="Renesto P."/>
            <person name="Audic S."/>
            <person name="Robert C."/>
            <person name="Blanc G."/>
            <person name="Fournier P.-E."/>
            <person name="Parinello H."/>
            <person name="Claverie J.-M."/>
            <person name="Raoult D."/>
        </authorList>
    </citation>
    <scope>NUCLEOTIDE SEQUENCE [LARGE SCALE GENOMIC DNA]</scope>
    <source>
        <strain>ATCC VR-1525 / URRWXCal2</strain>
    </source>
</reference>
<comment type="function">
    <text evidence="1">Promotes RNA polymerase assembly. Latches the N- and C-terminal regions of the beta' subunit thereby facilitating its interaction with the beta and alpha subunits.</text>
</comment>
<comment type="catalytic activity">
    <reaction evidence="1">
        <text>RNA(n) + a ribonucleoside 5'-triphosphate = RNA(n+1) + diphosphate</text>
        <dbReference type="Rhea" id="RHEA:21248"/>
        <dbReference type="Rhea" id="RHEA-COMP:14527"/>
        <dbReference type="Rhea" id="RHEA-COMP:17342"/>
        <dbReference type="ChEBI" id="CHEBI:33019"/>
        <dbReference type="ChEBI" id="CHEBI:61557"/>
        <dbReference type="ChEBI" id="CHEBI:140395"/>
        <dbReference type="EC" id="2.7.7.6"/>
    </reaction>
</comment>
<comment type="subunit">
    <text evidence="1">The RNAP catalytic core consists of 2 alpha, 1 beta, 1 beta' and 1 omega subunit. When a sigma factor is associated with the core the holoenzyme is formed, which can initiate transcription.</text>
</comment>
<comment type="similarity">
    <text evidence="1">Belongs to the RNA polymerase subunit omega family.</text>
</comment>
<dbReference type="EC" id="2.7.7.6" evidence="1"/>
<dbReference type="EMBL" id="CP000053">
    <property type="protein sequence ID" value="AAY61795.1"/>
    <property type="molecule type" value="Genomic_DNA"/>
</dbReference>
<dbReference type="SMR" id="Q4UKX8"/>
<dbReference type="STRING" id="315456.RF_0944"/>
<dbReference type="KEGG" id="rfe:RF_0944"/>
<dbReference type="eggNOG" id="COG1758">
    <property type="taxonomic scope" value="Bacteria"/>
</dbReference>
<dbReference type="HOGENOM" id="CLU_138545_0_0_5"/>
<dbReference type="OrthoDB" id="9796300at2"/>
<dbReference type="Proteomes" id="UP000008548">
    <property type="component" value="Chromosome"/>
</dbReference>
<dbReference type="GO" id="GO:0000428">
    <property type="term" value="C:DNA-directed RNA polymerase complex"/>
    <property type="evidence" value="ECO:0007669"/>
    <property type="project" value="UniProtKB-KW"/>
</dbReference>
<dbReference type="GO" id="GO:0003677">
    <property type="term" value="F:DNA binding"/>
    <property type="evidence" value="ECO:0007669"/>
    <property type="project" value="UniProtKB-UniRule"/>
</dbReference>
<dbReference type="GO" id="GO:0003899">
    <property type="term" value="F:DNA-directed RNA polymerase activity"/>
    <property type="evidence" value="ECO:0007669"/>
    <property type="project" value="UniProtKB-UniRule"/>
</dbReference>
<dbReference type="GO" id="GO:0006351">
    <property type="term" value="P:DNA-templated transcription"/>
    <property type="evidence" value="ECO:0007669"/>
    <property type="project" value="UniProtKB-UniRule"/>
</dbReference>
<dbReference type="Gene3D" id="3.90.940.10">
    <property type="match status" value="1"/>
</dbReference>
<dbReference type="HAMAP" id="MF_00366">
    <property type="entry name" value="RNApol_bact_RpoZ"/>
    <property type="match status" value="1"/>
</dbReference>
<dbReference type="InterPro" id="IPR003716">
    <property type="entry name" value="DNA-dir_RNA_pol_omega"/>
</dbReference>
<dbReference type="InterPro" id="IPR006110">
    <property type="entry name" value="Pol_omega/Rpo6/RPB6"/>
</dbReference>
<dbReference type="InterPro" id="IPR036161">
    <property type="entry name" value="RPB6/omega-like_sf"/>
</dbReference>
<dbReference type="NCBIfam" id="TIGR00690">
    <property type="entry name" value="rpoZ"/>
    <property type="match status" value="1"/>
</dbReference>
<dbReference type="PANTHER" id="PTHR34476">
    <property type="entry name" value="DNA-DIRECTED RNA POLYMERASE SUBUNIT OMEGA"/>
    <property type="match status" value="1"/>
</dbReference>
<dbReference type="PANTHER" id="PTHR34476:SF1">
    <property type="entry name" value="DNA-DIRECTED RNA POLYMERASE SUBUNIT OMEGA"/>
    <property type="match status" value="1"/>
</dbReference>
<dbReference type="Pfam" id="PF01192">
    <property type="entry name" value="RNA_pol_Rpb6"/>
    <property type="match status" value="1"/>
</dbReference>
<dbReference type="SMART" id="SM01409">
    <property type="entry name" value="RNA_pol_Rpb6"/>
    <property type="match status" value="1"/>
</dbReference>
<dbReference type="SUPFAM" id="SSF63562">
    <property type="entry name" value="RPB6/omega subunit-like"/>
    <property type="match status" value="1"/>
</dbReference>
<protein>
    <recommendedName>
        <fullName evidence="1">DNA-directed RNA polymerase subunit omega</fullName>
        <shortName evidence="1">RNAP omega subunit</shortName>
        <ecNumber evidence="1">2.7.7.6</ecNumber>
    </recommendedName>
    <alternativeName>
        <fullName evidence="1">RNA polymerase omega subunit</fullName>
    </alternativeName>
    <alternativeName>
        <fullName evidence="1">Transcriptase subunit omega</fullName>
    </alternativeName>
</protein>
<sequence length="126" mass="14712">MARITAEDCNKIIPDRFRLVVLATRYAKLLNYKVETNQIKKEKRDKPPVISLRRIAAGKVSVEQLEQDLINSLRTKTMIEPIVNQDESEDIEEKFEYLPEVCITEDYSDLDDQIFIDETGDDFEDK</sequence>
<name>RPOZ_RICFE</name>
<gene>
    <name evidence="1" type="primary">rpoZ</name>
    <name type="ordered locus">RF_0944</name>
</gene>